<sequence length="198" mass="22444">MQPEVEPVCFPAMGSPTMHRKAGALLMDLETPEEMQARSLGRPIKSSKQYLRQVIAEYEALDRELPCIRKFPTPPASQPLCLCMETLPEEDFTHLEVLQALEAQLPGAMESGRVSSIRFENMNVICGTAGRRNRWLIAVTDFQTRSRLLRSGLSPRGLAHQIVRHDDLLLGDYRLHLRRSLVRRRMLEALGAEPNEEA</sequence>
<organism>
    <name type="scientific">Homo sapiens</name>
    <name type="common">Human</name>
    <dbReference type="NCBI Taxonomy" id="9606"/>
    <lineage>
        <taxon>Eukaryota</taxon>
        <taxon>Metazoa</taxon>
        <taxon>Chordata</taxon>
        <taxon>Craniata</taxon>
        <taxon>Vertebrata</taxon>
        <taxon>Euteleostomi</taxon>
        <taxon>Mammalia</taxon>
        <taxon>Eutheria</taxon>
        <taxon>Euarchontoglires</taxon>
        <taxon>Primates</taxon>
        <taxon>Haplorrhini</taxon>
        <taxon>Catarrhini</taxon>
        <taxon>Hominidae</taxon>
        <taxon>Homo</taxon>
    </lineage>
</organism>
<keyword id="KW-1267">Proteomics identification</keyword>
<keyword id="KW-1185">Reference proteome</keyword>
<dbReference type="EMBL" id="AC008743">
    <property type="status" value="NOT_ANNOTATED_CDS"/>
    <property type="molecule type" value="Genomic_DNA"/>
</dbReference>
<dbReference type="CCDS" id="CCDS54296.1"/>
<dbReference type="RefSeq" id="NP_001182005.1">
    <property type="nucleotide sequence ID" value="NM_001195076.2"/>
</dbReference>
<dbReference type="FunCoup" id="C9J6K1">
    <property type="interactions" value="12"/>
</dbReference>
<dbReference type="STRING" id="9606.ENSP00000417035"/>
<dbReference type="iPTMnet" id="C9J6K1"/>
<dbReference type="PhosphoSitePlus" id="C9J6K1"/>
<dbReference type="BioMuta" id="C19orf81"/>
<dbReference type="MassIVE" id="C9J6K1"/>
<dbReference type="PaxDb" id="9606-ENSP00000417035"/>
<dbReference type="PeptideAtlas" id="C9J6K1"/>
<dbReference type="ProteomicsDB" id="8784"/>
<dbReference type="Antibodypedia" id="71698">
    <property type="antibodies" value="4 antibodies from 4 providers"/>
</dbReference>
<dbReference type="DNASU" id="342918"/>
<dbReference type="Ensembl" id="ENST00000425202.6">
    <property type="protein sequence ID" value="ENSP00000417035.1"/>
    <property type="gene ID" value="ENSG00000235034.7"/>
</dbReference>
<dbReference type="GeneID" id="342918"/>
<dbReference type="KEGG" id="hsa:342918"/>
<dbReference type="MANE-Select" id="ENST00000425202.6">
    <property type="protein sequence ID" value="ENSP00000417035.1"/>
    <property type="RefSeq nucleotide sequence ID" value="NM_001195076.2"/>
    <property type="RefSeq protein sequence ID" value="NP_001182005.1"/>
</dbReference>
<dbReference type="UCSC" id="uc021uyf.1">
    <property type="organism name" value="human"/>
</dbReference>
<dbReference type="AGR" id="HGNC:40041"/>
<dbReference type="CTD" id="342918"/>
<dbReference type="DisGeNET" id="342918"/>
<dbReference type="GeneCards" id="C19orf81"/>
<dbReference type="HGNC" id="HGNC:40041">
    <property type="gene designation" value="C19orf81"/>
</dbReference>
<dbReference type="HPA" id="ENSG00000235034">
    <property type="expression patterns" value="Tissue enriched (testis)"/>
</dbReference>
<dbReference type="neXtProt" id="NX_C9J6K1"/>
<dbReference type="OpenTargets" id="ENSG00000235034"/>
<dbReference type="VEuPathDB" id="HostDB:ENSG00000235034"/>
<dbReference type="eggNOG" id="ENOG502S8P9">
    <property type="taxonomic scope" value="Eukaryota"/>
</dbReference>
<dbReference type="GeneTree" id="ENSGT00530000064955"/>
<dbReference type="InParanoid" id="C9J6K1"/>
<dbReference type="OMA" id="NPPEKEM"/>
<dbReference type="OrthoDB" id="6076093at2759"/>
<dbReference type="PAN-GO" id="C9J6K1">
    <property type="GO annotations" value="0 GO annotations based on evolutionary models"/>
</dbReference>
<dbReference type="PhylomeDB" id="C9J6K1"/>
<dbReference type="TreeFam" id="TF353595"/>
<dbReference type="PathwayCommons" id="C9J6K1"/>
<dbReference type="BioGRID-ORCS" id="342918">
    <property type="hits" value="9 hits in 1128 CRISPR screens"/>
</dbReference>
<dbReference type="ChiTaRS" id="C19orf81">
    <property type="organism name" value="human"/>
</dbReference>
<dbReference type="GenomeRNAi" id="342918"/>
<dbReference type="Pharos" id="C9J6K1">
    <property type="development level" value="Tdark"/>
</dbReference>
<dbReference type="PRO" id="PR:C9J6K1"/>
<dbReference type="Proteomes" id="UP000005640">
    <property type="component" value="Chromosome 19"/>
</dbReference>
<dbReference type="RNAct" id="C9J6K1">
    <property type="molecule type" value="protein"/>
</dbReference>
<dbReference type="Bgee" id="ENSG00000235034">
    <property type="expression patterns" value="Expressed in adenohypophysis and 105 other cell types or tissues"/>
</dbReference>
<dbReference type="ExpressionAtlas" id="C9J6K1">
    <property type="expression patterns" value="baseline and differential"/>
</dbReference>
<dbReference type="InterPro" id="IPR031746">
    <property type="entry name" value="DUF4732"/>
</dbReference>
<dbReference type="PANTHER" id="PTHR37153">
    <property type="entry name" value="CHROMOSOME 19 C19ORF81 HOMOLOG"/>
    <property type="match status" value="1"/>
</dbReference>
<dbReference type="PANTHER" id="PTHR37153:SF1">
    <property type="entry name" value="HYPOTHETICAL LOC292874"/>
    <property type="match status" value="1"/>
</dbReference>
<dbReference type="Pfam" id="PF15876">
    <property type="entry name" value="DUF4732"/>
    <property type="match status" value="1"/>
</dbReference>
<reference key="1">
    <citation type="journal article" date="2004" name="Nature">
        <title>The DNA sequence and biology of human chromosome 19.</title>
        <authorList>
            <person name="Grimwood J."/>
            <person name="Gordon L.A."/>
            <person name="Olsen A.S."/>
            <person name="Terry A."/>
            <person name="Schmutz J."/>
            <person name="Lamerdin J.E."/>
            <person name="Hellsten U."/>
            <person name="Goodstein D."/>
            <person name="Couronne O."/>
            <person name="Tran-Gyamfi M."/>
            <person name="Aerts A."/>
            <person name="Altherr M."/>
            <person name="Ashworth L."/>
            <person name="Bajorek E."/>
            <person name="Black S."/>
            <person name="Branscomb E."/>
            <person name="Caenepeel S."/>
            <person name="Carrano A.V."/>
            <person name="Caoile C."/>
            <person name="Chan Y.M."/>
            <person name="Christensen M."/>
            <person name="Cleland C.A."/>
            <person name="Copeland A."/>
            <person name="Dalin E."/>
            <person name="Dehal P."/>
            <person name="Denys M."/>
            <person name="Detter J.C."/>
            <person name="Escobar J."/>
            <person name="Flowers D."/>
            <person name="Fotopulos D."/>
            <person name="Garcia C."/>
            <person name="Georgescu A.M."/>
            <person name="Glavina T."/>
            <person name="Gomez M."/>
            <person name="Gonzales E."/>
            <person name="Groza M."/>
            <person name="Hammon N."/>
            <person name="Hawkins T."/>
            <person name="Haydu L."/>
            <person name="Ho I."/>
            <person name="Huang W."/>
            <person name="Israni S."/>
            <person name="Jett J."/>
            <person name="Kadner K."/>
            <person name="Kimball H."/>
            <person name="Kobayashi A."/>
            <person name="Larionov V."/>
            <person name="Leem S.-H."/>
            <person name="Lopez F."/>
            <person name="Lou Y."/>
            <person name="Lowry S."/>
            <person name="Malfatti S."/>
            <person name="Martinez D."/>
            <person name="McCready P.M."/>
            <person name="Medina C."/>
            <person name="Morgan J."/>
            <person name="Nelson K."/>
            <person name="Nolan M."/>
            <person name="Ovcharenko I."/>
            <person name="Pitluck S."/>
            <person name="Pollard M."/>
            <person name="Popkie A.P."/>
            <person name="Predki P."/>
            <person name="Quan G."/>
            <person name="Ramirez L."/>
            <person name="Rash S."/>
            <person name="Retterer J."/>
            <person name="Rodriguez A."/>
            <person name="Rogers S."/>
            <person name="Salamov A."/>
            <person name="Salazar A."/>
            <person name="She X."/>
            <person name="Smith D."/>
            <person name="Slezak T."/>
            <person name="Solovyev V."/>
            <person name="Thayer N."/>
            <person name="Tice H."/>
            <person name="Tsai M."/>
            <person name="Ustaszewska A."/>
            <person name="Vo N."/>
            <person name="Wagner M."/>
            <person name="Wheeler J."/>
            <person name="Wu K."/>
            <person name="Xie G."/>
            <person name="Yang J."/>
            <person name="Dubchak I."/>
            <person name="Furey T.S."/>
            <person name="DeJong P."/>
            <person name="Dickson M."/>
            <person name="Gordon D."/>
            <person name="Eichler E.E."/>
            <person name="Pennacchio L.A."/>
            <person name="Richardson P."/>
            <person name="Stubbs L."/>
            <person name="Rokhsar D.S."/>
            <person name="Myers R.M."/>
            <person name="Rubin E.M."/>
            <person name="Lucas S.M."/>
        </authorList>
    </citation>
    <scope>NUCLEOTIDE SEQUENCE [LARGE SCALE GENOMIC DNA]</scope>
</reference>
<name>CS081_HUMAN</name>
<proteinExistence type="evidence at protein level"/>
<accession>C9J6K1</accession>
<gene>
    <name type="primary">C19orf81</name>
</gene>
<protein>
    <recommendedName>
        <fullName>Putative uncharacterized protein C19orf81</fullName>
    </recommendedName>
</protein>
<feature type="chain" id="PRO_0000413696" description="Putative uncharacterized protein C19orf81">
    <location>
        <begin position="1"/>
        <end position="198"/>
    </location>
</feature>